<accession>Q2FZ77</accession>
<feature type="chain" id="PRO_1000053863" description="Bifunctional protein PyrR">
    <location>
        <begin position="1"/>
        <end position="175"/>
    </location>
</feature>
<feature type="short sequence motif" description="PRPP-binding" evidence="1">
    <location>
        <begin position="98"/>
        <end position="110"/>
    </location>
</feature>
<reference key="1">
    <citation type="book" date="2006" name="Gram positive pathogens, 2nd edition">
        <title>The Staphylococcus aureus NCTC 8325 genome.</title>
        <editorList>
            <person name="Fischetti V."/>
            <person name="Novick R."/>
            <person name="Ferretti J."/>
            <person name="Portnoy D."/>
            <person name="Rood J."/>
        </editorList>
        <authorList>
            <person name="Gillaspy A.F."/>
            <person name="Worrell V."/>
            <person name="Orvis J."/>
            <person name="Roe B.A."/>
            <person name="Dyer D.W."/>
            <person name="Iandolo J.J."/>
        </authorList>
    </citation>
    <scope>NUCLEOTIDE SEQUENCE [LARGE SCALE GENOMIC DNA]</scope>
    <source>
        <strain>NCTC 8325 / PS 47</strain>
    </source>
</reference>
<keyword id="KW-0328">Glycosyltransferase</keyword>
<keyword id="KW-1185">Reference proteome</keyword>
<keyword id="KW-0694">RNA-binding</keyword>
<keyword id="KW-0804">Transcription</keyword>
<keyword id="KW-0805">Transcription regulation</keyword>
<keyword id="KW-0806">Transcription termination</keyword>
<keyword id="KW-0808">Transferase</keyword>
<gene>
    <name evidence="1" type="primary">pyrR</name>
    <name type="ordered locus">SAOUHSC_01164</name>
</gene>
<evidence type="ECO:0000255" key="1">
    <source>
        <dbReference type="HAMAP-Rule" id="MF_01219"/>
    </source>
</evidence>
<organism>
    <name type="scientific">Staphylococcus aureus (strain NCTC 8325 / PS 47)</name>
    <dbReference type="NCBI Taxonomy" id="93061"/>
    <lineage>
        <taxon>Bacteria</taxon>
        <taxon>Bacillati</taxon>
        <taxon>Bacillota</taxon>
        <taxon>Bacilli</taxon>
        <taxon>Bacillales</taxon>
        <taxon>Staphylococcaceae</taxon>
        <taxon>Staphylococcus</taxon>
    </lineage>
</organism>
<protein>
    <recommendedName>
        <fullName evidence="1">Bifunctional protein PyrR</fullName>
    </recommendedName>
    <domain>
        <recommendedName>
            <fullName evidence="1">Pyrimidine operon regulatory protein</fullName>
        </recommendedName>
    </domain>
    <domain>
        <recommendedName>
            <fullName evidence="1">Uracil phosphoribosyltransferase</fullName>
            <shortName evidence="1">UPRTase</shortName>
            <ecNumber evidence="1">2.4.2.9</ecNumber>
        </recommendedName>
    </domain>
</protein>
<comment type="function">
    <text evidence="1">Regulates transcriptional attenuation of the pyrimidine nucleotide (pyr) operon by binding in a uridine-dependent manner to specific sites on pyr mRNA. This disrupts an antiterminator hairpin in the RNA and favors formation of a downstream transcription terminator, leading to a reduced expression of downstream genes.</text>
</comment>
<comment type="function">
    <text evidence="1">Also displays a weak uracil phosphoribosyltransferase activity which is not physiologically significant.</text>
</comment>
<comment type="catalytic activity">
    <reaction evidence="1">
        <text>UMP + diphosphate = 5-phospho-alpha-D-ribose 1-diphosphate + uracil</text>
        <dbReference type="Rhea" id="RHEA:13017"/>
        <dbReference type="ChEBI" id="CHEBI:17568"/>
        <dbReference type="ChEBI" id="CHEBI:33019"/>
        <dbReference type="ChEBI" id="CHEBI:57865"/>
        <dbReference type="ChEBI" id="CHEBI:58017"/>
        <dbReference type="EC" id="2.4.2.9"/>
    </reaction>
</comment>
<comment type="subunit">
    <text evidence="1">Homodimer and homohexamer; in equilibrium.</text>
</comment>
<comment type="similarity">
    <text evidence="1">Belongs to the purine/pyrimidine phosphoribosyltransferase family. PyrR subfamily.</text>
</comment>
<dbReference type="EC" id="2.4.2.9" evidence="1"/>
<dbReference type="EMBL" id="CP000253">
    <property type="protein sequence ID" value="ABD30272.1"/>
    <property type="molecule type" value="Genomic_DNA"/>
</dbReference>
<dbReference type="RefSeq" id="WP_000003870.1">
    <property type="nucleotide sequence ID" value="NZ_LS483365.1"/>
</dbReference>
<dbReference type="RefSeq" id="YP_499704.1">
    <property type="nucleotide sequence ID" value="NC_007795.1"/>
</dbReference>
<dbReference type="SMR" id="Q2FZ77"/>
<dbReference type="STRING" id="93061.SAOUHSC_01164"/>
<dbReference type="PaxDb" id="1280-SAXN108_1196"/>
<dbReference type="GeneID" id="3920916"/>
<dbReference type="KEGG" id="sao:SAOUHSC_01164"/>
<dbReference type="PATRIC" id="fig|93061.5.peg.1067"/>
<dbReference type="eggNOG" id="COG2065">
    <property type="taxonomic scope" value="Bacteria"/>
</dbReference>
<dbReference type="HOGENOM" id="CLU_094234_2_1_9"/>
<dbReference type="OrthoDB" id="9802227at2"/>
<dbReference type="PRO" id="PR:Q2FZ77"/>
<dbReference type="Proteomes" id="UP000008816">
    <property type="component" value="Chromosome"/>
</dbReference>
<dbReference type="GO" id="GO:0003723">
    <property type="term" value="F:RNA binding"/>
    <property type="evidence" value="ECO:0007669"/>
    <property type="project" value="UniProtKB-UniRule"/>
</dbReference>
<dbReference type="GO" id="GO:0004845">
    <property type="term" value="F:uracil phosphoribosyltransferase activity"/>
    <property type="evidence" value="ECO:0007669"/>
    <property type="project" value="UniProtKB-UniRule"/>
</dbReference>
<dbReference type="GO" id="GO:0006353">
    <property type="term" value="P:DNA-templated transcription termination"/>
    <property type="evidence" value="ECO:0007669"/>
    <property type="project" value="UniProtKB-UniRule"/>
</dbReference>
<dbReference type="CDD" id="cd06223">
    <property type="entry name" value="PRTases_typeI"/>
    <property type="match status" value="1"/>
</dbReference>
<dbReference type="FunFam" id="3.40.50.2020:FF:000020">
    <property type="entry name" value="Bifunctional protein PyrR"/>
    <property type="match status" value="1"/>
</dbReference>
<dbReference type="Gene3D" id="3.40.50.2020">
    <property type="match status" value="1"/>
</dbReference>
<dbReference type="HAMAP" id="MF_01219">
    <property type="entry name" value="PyrR"/>
    <property type="match status" value="1"/>
</dbReference>
<dbReference type="InterPro" id="IPR000836">
    <property type="entry name" value="PRibTrfase_dom"/>
</dbReference>
<dbReference type="InterPro" id="IPR029057">
    <property type="entry name" value="PRTase-like"/>
</dbReference>
<dbReference type="InterPro" id="IPR023050">
    <property type="entry name" value="PyrR"/>
</dbReference>
<dbReference type="InterPro" id="IPR050137">
    <property type="entry name" value="PyrR_bifunctional"/>
</dbReference>
<dbReference type="NCBIfam" id="NF003546">
    <property type="entry name" value="PRK05205.1-2"/>
    <property type="match status" value="1"/>
</dbReference>
<dbReference type="NCBIfam" id="NF003548">
    <property type="entry name" value="PRK05205.1-4"/>
    <property type="match status" value="1"/>
</dbReference>
<dbReference type="NCBIfam" id="NF003549">
    <property type="entry name" value="PRK05205.1-5"/>
    <property type="match status" value="1"/>
</dbReference>
<dbReference type="PANTHER" id="PTHR11608">
    <property type="entry name" value="BIFUNCTIONAL PROTEIN PYRR"/>
    <property type="match status" value="1"/>
</dbReference>
<dbReference type="PANTHER" id="PTHR11608:SF0">
    <property type="entry name" value="BIFUNCTIONAL PROTEIN PYRR"/>
    <property type="match status" value="1"/>
</dbReference>
<dbReference type="Pfam" id="PF00156">
    <property type="entry name" value="Pribosyltran"/>
    <property type="match status" value="1"/>
</dbReference>
<dbReference type="SUPFAM" id="SSF53271">
    <property type="entry name" value="PRTase-like"/>
    <property type="match status" value="1"/>
</dbReference>
<name>PYRR_STAA8</name>
<proteinExistence type="inferred from homology"/>
<sequence length="175" mass="19855">MSERIIMDDAAIQRTVTRIAHEILEYNKGTDNLILLGIKTRGEYLANRIQDKIHQIEQQRIPTGTIDITYFRDDIEHMSSLTTKDAIDIDTDITDKVVIIIDDVLYTGRTVRASLDAILLNARPIKIGLAALVDRGHRELPIRADFVGKNIPTSKEETVSVYLEEMDQRNAVIIK</sequence>